<sequence length="172" mass="18627">MDNPRRIIIGIDPGSRITGYGIIWSQGSKQGCIAFGQIKTDNDSLNFRLHQIERELRDLILIHRPHEAAIEQVFTFHNHQSALKLGQARGAALVATAACALSVAEYSARQIKQAVVGYGAATKAQVQHMVHLLLQLEKAPPADAADALAIALCHATSSRLSEKLMQAKGTLT</sequence>
<reference key="1">
    <citation type="journal article" date="2003" name="Proc. Natl. Acad. Sci. U.S.A.">
        <title>Complete genome sequence of the Q-fever pathogen, Coxiella burnetii.</title>
        <authorList>
            <person name="Seshadri R."/>
            <person name="Paulsen I.T."/>
            <person name="Eisen J.A."/>
            <person name="Read T.D."/>
            <person name="Nelson K.E."/>
            <person name="Nelson W.C."/>
            <person name="Ward N.L."/>
            <person name="Tettelin H."/>
            <person name="Davidsen T.M."/>
            <person name="Beanan M.J."/>
            <person name="DeBoy R.T."/>
            <person name="Daugherty S.C."/>
            <person name="Brinkac L.M."/>
            <person name="Madupu R."/>
            <person name="Dodson R.J."/>
            <person name="Khouri H.M."/>
            <person name="Lee K.H."/>
            <person name="Carty H.A."/>
            <person name="Scanlan D."/>
            <person name="Heinzen R.A."/>
            <person name="Thompson H.A."/>
            <person name="Samuel J.E."/>
            <person name="Fraser C.M."/>
            <person name="Heidelberg J.F."/>
        </authorList>
    </citation>
    <scope>NUCLEOTIDE SEQUENCE [LARGE SCALE GENOMIC DNA]</scope>
    <source>
        <strain>RSA 493 / Nine Mile phase I</strain>
    </source>
</reference>
<comment type="function">
    <text evidence="1">The RuvA-RuvB-RuvC complex processes Holliday junction (HJ) DNA during genetic recombination and DNA repair. Endonuclease that resolves HJ intermediates. Cleaves cruciform DNA by making single-stranded nicks across the HJ at symmetrical positions within the homologous arms, yielding a 5'-phosphate and a 3'-hydroxyl group; requires a central core of homology in the junction. The consensus cleavage sequence is 5'-(A/T)TT(C/G)-3'. Cleavage occurs on the 3'-side of the TT dinucleotide at the point of strand exchange. HJ branch migration catalyzed by RuvA-RuvB allows RuvC to scan DNA until it finds its consensus sequence, where it cleaves and resolves the cruciform DNA.</text>
</comment>
<comment type="catalytic activity">
    <reaction evidence="1">
        <text>Endonucleolytic cleavage at a junction such as a reciprocal single-stranded crossover between two homologous DNA duplexes (Holliday junction).</text>
        <dbReference type="EC" id="3.1.21.10"/>
    </reaction>
</comment>
<comment type="cofactor">
    <cofactor evidence="1">
        <name>Mg(2+)</name>
        <dbReference type="ChEBI" id="CHEBI:18420"/>
    </cofactor>
    <text evidence="1">Binds 2 Mg(2+) ion per subunit.</text>
</comment>
<comment type="subunit">
    <text evidence="1">Homodimer which binds Holliday junction (HJ) DNA. The HJ becomes 2-fold symmetrical on binding to RuvC with unstacked arms; it has a different conformation from HJ DNA in complex with RuvA. In the full resolvosome a probable DNA-RuvA(4)-RuvB(12)-RuvC(2) complex forms which resolves the HJ.</text>
</comment>
<comment type="subcellular location">
    <subcellularLocation>
        <location evidence="1">Cytoplasm</location>
    </subcellularLocation>
</comment>
<comment type="similarity">
    <text evidence="1">Belongs to the RuvC family.</text>
</comment>
<proteinExistence type="inferred from homology"/>
<dbReference type="EC" id="3.1.21.10" evidence="1"/>
<dbReference type="EMBL" id="AE016828">
    <property type="protein sequence ID" value="AAO91064.1"/>
    <property type="molecule type" value="Genomic_DNA"/>
</dbReference>
<dbReference type="RefSeq" id="NP_820550.1">
    <property type="nucleotide sequence ID" value="NC_002971.4"/>
</dbReference>
<dbReference type="RefSeq" id="WP_010958304.1">
    <property type="nucleotide sequence ID" value="NZ_CCYB01000017.1"/>
</dbReference>
<dbReference type="SMR" id="Q83BE3"/>
<dbReference type="STRING" id="227377.CBU_1567"/>
<dbReference type="EnsemblBacteria" id="AAO91064">
    <property type="protein sequence ID" value="AAO91064"/>
    <property type="gene ID" value="CBU_1567"/>
</dbReference>
<dbReference type="GeneID" id="1209477"/>
<dbReference type="KEGG" id="cbu:CBU_1567"/>
<dbReference type="PATRIC" id="fig|227377.7.peg.1568"/>
<dbReference type="eggNOG" id="COG0817">
    <property type="taxonomic scope" value="Bacteria"/>
</dbReference>
<dbReference type="HOGENOM" id="CLU_091257_2_1_6"/>
<dbReference type="OrthoDB" id="9805499at2"/>
<dbReference type="Proteomes" id="UP000002671">
    <property type="component" value="Chromosome"/>
</dbReference>
<dbReference type="GO" id="GO:0005737">
    <property type="term" value="C:cytoplasm"/>
    <property type="evidence" value="ECO:0007669"/>
    <property type="project" value="UniProtKB-SubCell"/>
</dbReference>
<dbReference type="GO" id="GO:0048476">
    <property type="term" value="C:Holliday junction resolvase complex"/>
    <property type="evidence" value="ECO:0007669"/>
    <property type="project" value="UniProtKB-UniRule"/>
</dbReference>
<dbReference type="GO" id="GO:0008821">
    <property type="term" value="F:crossover junction DNA endonuclease activity"/>
    <property type="evidence" value="ECO:0007669"/>
    <property type="project" value="UniProtKB-UniRule"/>
</dbReference>
<dbReference type="GO" id="GO:0003677">
    <property type="term" value="F:DNA binding"/>
    <property type="evidence" value="ECO:0007669"/>
    <property type="project" value="UniProtKB-KW"/>
</dbReference>
<dbReference type="GO" id="GO:0000287">
    <property type="term" value="F:magnesium ion binding"/>
    <property type="evidence" value="ECO:0007669"/>
    <property type="project" value="UniProtKB-UniRule"/>
</dbReference>
<dbReference type="GO" id="GO:0006310">
    <property type="term" value="P:DNA recombination"/>
    <property type="evidence" value="ECO:0007669"/>
    <property type="project" value="UniProtKB-UniRule"/>
</dbReference>
<dbReference type="GO" id="GO:0006281">
    <property type="term" value="P:DNA repair"/>
    <property type="evidence" value="ECO:0007669"/>
    <property type="project" value="UniProtKB-UniRule"/>
</dbReference>
<dbReference type="CDD" id="cd16962">
    <property type="entry name" value="RuvC"/>
    <property type="match status" value="1"/>
</dbReference>
<dbReference type="FunFam" id="3.30.420.10:FF:000002">
    <property type="entry name" value="Crossover junction endodeoxyribonuclease RuvC"/>
    <property type="match status" value="1"/>
</dbReference>
<dbReference type="Gene3D" id="3.30.420.10">
    <property type="entry name" value="Ribonuclease H-like superfamily/Ribonuclease H"/>
    <property type="match status" value="1"/>
</dbReference>
<dbReference type="HAMAP" id="MF_00034">
    <property type="entry name" value="RuvC"/>
    <property type="match status" value="1"/>
</dbReference>
<dbReference type="InterPro" id="IPR012337">
    <property type="entry name" value="RNaseH-like_sf"/>
</dbReference>
<dbReference type="InterPro" id="IPR036397">
    <property type="entry name" value="RNaseH_sf"/>
</dbReference>
<dbReference type="InterPro" id="IPR020563">
    <property type="entry name" value="X-over_junc_endoDNase_Mg_BS"/>
</dbReference>
<dbReference type="InterPro" id="IPR002176">
    <property type="entry name" value="X-over_junc_endoDNase_RuvC"/>
</dbReference>
<dbReference type="NCBIfam" id="TIGR00228">
    <property type="entry name" value="ruvC"/>
    <property type="match status" value="1"/>
</dbReference>
<dbReference type="PANTHER" id="PTHR30194">
    <property type="entry name" value="CROSSOVER JUNCTION ENDODEOXYRIBONUCLEASE RUVC"/>
    <property type="match status" value="1"/>
</dbReference>
<dbReference type="PANTHER" id="PTHR30194:SF3">
    <property type="entry name" value="CROSSOVER JUNCTION ENDODEOXYRIBONUCLEASE RUVC"/>
    <property type="match status" value="1"/>
</dbReference>
<dbReference type="Pfam" id="PF02075">
    <property type="entry name" value="RuvC"/>
    <property type="match status" value="1"/>
</dbReference>
<dbReference type="PRINTS" id="PR00696">
    <property type="entry name" value="RSOLVASERUVC"/>
</dbReference>
<dbReference type="SUPFAM" id="SSF53098">
    <property type="entry name" value="Ribonuclease H-like"/>
    <property type="match status" value="1"/>
</dbReference>
<dbReference type="PROSITE" id="PS01321">
    <property type="entry name" value="RUVC"/>
    <property type="match status" value="1"/>
</dbReference>
<name>RUVC_COXBU</name>
<protein>
    <recommendedName>
        <fullName evidence="1">Crossover junction endodeoxyribonuclease RuvC</fullName>
        <ecNumber evidence="1">3.1.21.10</ecNumber>
    </recommendedName>
    <alternativeName>
        <fullName evidence="1">Holliday junction nuclease RuvC</fullName>
    </alternativeName>
    <alternativeName>
        <fullName evidence="1">Holliday junction resolvase RuvC</fullName>
    </alternativeName>
</protein>
<accession>Q83BE3</accession>
<gene>
    <name evidence="1" type="primary">ruvC</name>
    <name type="ordered locus">CBU_1567</name>
</gene>
<keyword id="KW-0963">Cytoplasm</keyword>
<keyword id="KW-0227">DNA damage</keyword>
<keyword id="KW-0233">DNA recombination</keyword>
<keyword id="KW-0234">DNA repair</keyword>
<keyword id="KW-0238">DNA-binding</keyword>
<keyword id="KW-0255">Endonuclease</keyword>
<keyword id="KW-0378">Hydrolase</keyword>
<keyword id="KW-0460">Magnesium</keyword>
<keyword id="KW-0479">Metal-binding</keyword>
<keyword id="KW-0540">Nuclease</keyword>
<keyword id="KW-1185">Reference proteome</keyword>
<organism>
    <name type="scientific">Coxiella burnetii (strain RSA 493 / Nine Mile phase I)</name>
    <dbReference type="NCBI Taxonomy" id="227377"/>
    <lineage>
        <taxon>Bacteria</taxon>
        <taxon>Pseudomonadati</taxon>
        <taxon>Pseudomonadota</taxon>
        <taxon>Gammaproteobacteria</taxon>
        <taxon>Legionellales</taxon>
        <taxon>Coxiellaceae</taxon>
        <taxon>Coxiella</taxon>
    </lineage>
</organism>
<feature type="chain" id="PRO_0000183094" description="Crossover junction endodeoxyribonuclease RuvC">
    <location>
        <begin position="1"/>
        <end position="172"/>
    </location>
</feature>
<feature type="active site" evidence="1">
    <location>
        <position position="12"/>
    </location>
</feature>
<feature type="active site" evidence="1">
    <location>
        <position position="71"/>
    </location>
</feature>
<feature type="active site" evidence="1">
    <location>
        <position position="143"/>
    </location>
</feature>
<feature type="binding site" evidence="1">
    <location>
        <position position="12"/>
    </location>
    <ligand>
        <name>Mg(2+)</name>
        <dbReference type="ChEBI" id="CHEBI:18420"/>
        <label>1</label>
    </ligand>
</feature>
<feature type="binding site" evidence="1">
    <location>
        <position position="71"/>
    </location>
    <ligand>
        <name>Mg(2+)</name>
        <dbReference type="ChEBI" id="CHEBI:18420"/>
        <label>2</label>
    </ligand>
</feature>
<feature type="binding site" evidence="1">
    <location>
        <position position="143"/>
    </location>
    <ligand>
        <name>Mg(2+)</name>
        <dbReference type="ChEBI" id="CHEBI:18420"/>
        <label>1</label>
    </ligand>
</feature>
<evidence type="ECO:0000255" key="1">
    <source>
        <dbReference type="HAMAP-Rule" id="MF_00034"/>
    </source>
</evidence>